<protein>
    <recommendedName>
        <fullName evidence="1">Dual-action ribosomal maturation protein DarP</fullName>
    </recommendedName>
    <alternativeName>
        <fullName evidence="1">Large ribosomal subunit assembly factor DarP</fullName>
    </alternativeName>
</protein>
<keyword id="KW-0963">Cytoplasm</keyword>
<keyword id="KW-0690">Ribosome biogenesis</keyword>
<keyword id="KW-0694">RNA-binding</keyword>
<keyword id="KW-0699">rRNA-binding</keyword>
<feature type="chain" id="PRO_1000148431" description="Dual-action ribosomal maturation protein DarP">
    <location>
        <begin position="1"/>
        <end position="174"/>
    </location>
</feature>
<name>DARP_VIBA3</name>
<reference key="1">
    <citation type="submission" date="2009-02" db="EMBL/GenBank/DDBJ databases">
        <title>Vibrio splendidus str. LGP32 complete genome.</title>
        <authorList>
            <person name="Mazel D."/>
            <person name="Le Roux F."/>
        </authorList>
    </citation>
    <scope>NUCLEOTIDE SEQUENCE [LARGE SCALE GENOMIC DNA]</scope>
    <source>
        <strain>LGP32</strain>
    </source>
</reference>
<organism>
    <name type="scientific">Vibrio atlanticus (strain LGP32)</name>
    <name type="common">Vibrio splendidus (strain Mel32)</name>
    <dbReference type="NCBI Taxonomy" id="575788"/>
    <lineage>
        <taxon>Bacteria</taxon>
        <taxon>Pseudomonadati</taxon>
        <taxon>Pseudomonadota</taxon>
        <taxon>Gammaproteobacteria</taxon>
        <taxon>Vibrionales</taxon>
        <taxon>Vibrionaceae</taxon>
        <taxon>Vibrio</taxon>
    </lineage>
</organism>
<comment type="function">
    <text evidence="1">Member of a network of 50S ribosomal subunit biogenesis factors which assembles along the 30S-50S interface, preventing incorrect 23S rRNA structures from forming. Promotes peptidyl transferase center (PTC) maturation.</text>
</comment>
<comment type="subcellular location">
    <subcellularLocation>
        <location evidence="1">Cytoplasm</location>
    </subcellularLocation>
    <text evidence="1">Associates with late stage pre-50S ribosomal subunits.</text>
</comment>
<comment type="similarity">
    <text evidence="1">Belongs to the DarP family.</text>
</comment>
<gene>
    <name evidence="1" type="primary">darP</name>
    <name type="ordered locus">VS_2764</name>
</gene>
<dbReference type="EMBL" id="FM954972">
    <property type="protein sequence ID" value="CAV20047.1"/>
    <property type="molecule type" value="Genomic_DNA"/>
</dbReference>
<dbReference type="SMR" id="B7VKW1"/>
<dbReference type="STRING" id="575788.VS_2764"/>
<dbReference type="KEGG" id="vsp:VS_2764"/>
<dbReference type="PATRIC" id="fig|575788.5.peg.3979"/>
<dbReference type="eggNOG" id="COG3028">
    <property type="taxonomic scope" value="Bacteria"/>
</dbReference>
<dbReference type="HOGENOM" id="CLU_106757_2_0_6"/>
<dbReference type="Proteomes" id="UP000009100">
    <property type="component" value="Chromosome 1"/>
</dbReference>
<dbReference type="GO" id="GO:0005829">
    <property type="term" value="C:cytosol"/>
    <property type="evidence" value="ECO:0007669"/>
    <property type="project" value="TreeGrafter"/>
</dbReference>
<dbReference type="GO" id="GO:0043022">
    <property type="term" value="F:ribosome binding"/>
    <property type="evidence" value="ECO:0007669"/>
    <property type="project" value="UniProtKB-UniRule"/>
</dbReference>
<dbReference type="GO" id="GO:0019843">
    <property type="term" value="F:rRNA binding"/>
    <property type="evidence" value="ECO:0007669"/>
    <property type="project" value="UniProtKB-UniRule"/>
</dbReference>
<dbReference type="GO" id="GO:1902626">
    <property type="term" value="P:assembly of large subunit precursor of preribosome"/>
    <property type="evidence" value="ECO:0007669"/>
    <property type="project" value="UniProtKB-UniRule"/>
</dbReference>
<dbReference type="CDD" id="cd16331">
    <property type="entry name" value="YjgA-like"/>
    <property type="match status" value="1"/>
</dbReference>
<dbReference type="FunFam" id="1.10.60.30:FF:000002">
    <property type="entry name" value="UPF0307 protein YjgA"/>
    <property type="match status" value="1"/>
</dbReference>
<dbReference type="Gene3D" id="1.10.60.30">
    <property type="entry name" value="PSPTO4464-like domains"/>
    <property type="match status" value="2"/>
</dbReference>
<dbReference type="HAMAP" id="MF_00765">
    <property type="entry name" value="DarP"/>
    <property type="match status" value="1"/>
</dbReference>
<dbReference type="InterPro" id="IPR006839">
    <property type="entry name" value="DarP"/>
</dbReference>
<dbReference type="InterPro" id="IPR023153">
    <property type="entry name" value="DarP_sf"/>
</dbReference>
<dbReference type="NCBIfam" id="NF003593">
    <property type="entry name" value="PRK05255.1-1"/>
    <property type="match status" value="1"/>
</dbReference>
<dbReference type="PANTHER" id="PTHR38101">
    <property type="entry name" value="UPF0307 PROTEIN YJGA"/>
    <property type="match status" value="1"/>
</dbReference>
<dbReference type="PANTHER" id="PTHR38101:SF1">
    <property type="entry name" value="UPF0307 PROTEIN YJGA"/>
    <property type="match status" value="1"/>
</dbReference>
<dbReference type="Pfam" id="PF04751">
    <property type="entry name" value="DarP"/>
    <property type="match status" value="1"/>
</dbReference>
<dbReference type="PIRSF" id="PIRSF016183">
    <property type="entry name" value="UCP016183"/>
    <property type="match status" value="1"/>
</dbReference>
<dbReference type="SUPFAM" id="SSF158710">
    <property type="entry name" value="PSPTO4464-like"/>
    <property type="match status" value="1"/>
</dbReference>
<proteinExistence type="inferred from homology"/>
<evidence type="ECO:0000255" key="1">
    <source>
        <dbReference type="HAMAP-Rule" id="MF_00765"/>
    </source>
</evidence>
<sequence length="174" mass="20060">MARKNQKAPWEPEEEIIWVSKTEMKTDMDALQKLGEELVDLKPSVLDKFPLSEDLAQAIKDAQRFKNEAKRRQLQYIGKVMRSVDPEPIQAALDKIRNKHSQATVELHKLEQLRDRVVAEGDAAISDVMEMYPEADRQRLRQLARQANKEKAANKPAKSSREIFQILKELKLGD</sequence>
<accession>B7VKW1</accession>